<organism>
    <name type="scientific">Erwinia tasmaniensis (strain DSM 17950 / CFBP 7177 / CIP 109463 / NCPPB 4357 / Et1/99)</name>
    <dbReference type="NCBI Taxonomy" id="465817"/>
    <lineage>
        <taxon>Bacteria</taxon>
        <taxon>Pseudomonadati</taxon>
        <taxon>Pseudomonadota</taxon>
        <taxon>Gammaproteobacteria</taxon>
        <taxon>Enterobacterales</taxon>
        <taxon>Erwiniaceae</taxon>
        <taxon>Erwinia</taxon>
    </lineage>
</organism>
<keyword id="KW-0997">Cell inner membrane</keyword>
<keyword id="KW-1003">Cell membrane</keyword>
<keyword id="KW-0406">Ion transport</keyword>
<keyword id="KW-0472">Membrane</keyword>
<keyword id="KW-1185">Reference proteome</keyword>
<keyword id="KW-0915">Sodium</keyword>
<keyword id="KW-0739">Sodium transport</keyword>
<keyword id="KW-0769">Symport</keyword>
<keyword id="KW-0812">Transmembrane</keyword>
<keyword id="KW-1133">Transmembrane helix</keyword>
<keyword id="KW-0813">Transport</keyword>
<evidence type="ECO:0000255" key="1">
    <source>
        <dbReference type="HAMAP-Rule" id="MF_01426"/>
    </source>
</evidence>
<gene>
    <name evidence="1" type="primary">actP</name>
    <name type="ordered locus">ETA_30700</name>
</gene>
<reference key="1">
    <citation type="journal article" date="2008" name="Environ. Microbiol.">
        <title>The genome of Erwinia tasmaniensis strain Et1/99, a non-pathogenic bacterium in the genus Erwinia.</title>
        <authorList>
            <person name="Kube M."/>
            <person name="Migdoll A.M."/>
            <person name="Mueller I."/>
            <person name="Kuhl H."/>
            <person name="Beck A."/>
            <person name="Reinhardt R."/>
            <person name="Geider K."/>
        </authorList>
    </citation>
    <scope>NUCLEOTIDE SEQUENCE [LARGE SCALE GENOMIC DNA]</scope>
    <source>
        <strain>DSM 17950 / CFBP 7177 / CIP 109463 / NCPPB 4357 / Et1/99</strain>
    </source>
</reference>
<comment type="function">
    <text evidence="1">Transports acetate.</text>
</comment>
<comment type="subcellular location">
    <subcellularLocation>
        <location evidence="1">Cell inner membrane</location>
        <topology evidence="1">Multi-pass membrane protein</topology>
    </subcellularLocation>
</comment>
<comment type="similarity">
    <text evidence="1">Belongs to the sodium:solute symporter (SSF) (TC 2.A.21) family.</text>
</comment>
<dbReference type="EMBL" id="CU468135">
    <property type="protein sequence ID" value="CAO98116.1"/>
    <property type="molecule type" value="Genomic_DNA"/>
</dbReference>
<dbReference type="RefSeq" id="WP_012442767.1">
    <property type="nucleotide sequence ID" value="NC_010694.1"/>
</dbReference>
<dbReference type="SMR" id="B2VKE4"/>
<dbReference type="STRING" id="465817.ETA_30700"/>
<dbReference type="KEGG" id="eta:ETA_30700"/>
<dbReference type="eggNOG" id="COG4147">
    <property type="taxonomic scope" value="Bacteria"/>
</dbReference>
<dbReference type="HOGENOM" id="CLU_018808_8_3_6"/>
<dbReference type="OrthoDB" id="9764416at2"/>
<dbReference type="Proteomes" id="UP000001726">
    <property type="component" value="Chromosome"/>
</dbReference>
<dbReference type="GO" id="GO:0005886">
    <property type="term" value="C:plasma membrane"/>
    <property type="evidence" value="ECO:0007669"/>
    <property type="project" value="UniProtKB-SubCell"/>
</dbReference>
<dbReference type="GO" id="GO:0015123">
    <property type="term" value="F:acetate transmembrane transporter activity"/>
    <property type="evidence" value="ECO:0007669"/>
    <property type="project" value="UniProtKB-UniRule"/>
</dbReference>
<dbReference type="GO" id="GO:0043879">
    <property type="term" value="F:glycolate transmembrane transporter activity"/>
    <property type="evidence" value="ECO:0007669"/>
    <property type="project" value="InterPro"/>
</dbReference>
<dbReference type="GO" id="GO:0015293">
    <property type="term" value="F:symporter activity"/>
    <property type="evidence" value="ECO:0007669"/>
    <property type="project" value="UniProtKB-KW"/>
</dbReference>
<dbReference type="GO" id="GO:0006847">
    <property type="term" value="P:plasma membrane acetate transport"/>
    <property type="evidence" value="ECO:0007669"/>
    <property type="project" value="TreeGrafter"/>
</dbReference>
<dbReference type="GO" id="GO:0006814">
    <property type="term" value="P:sodium ion transport"/>
    <property type="evidence" value="ECO:0007669"/>
    <property type="project" value="UniProtKB-KW"/>
</dbReference>
<dbReference type="CDD" id="cd11480">
    <property type="entry name" value="SLC5sbd_u4"/>
    <property type="match status" value="1"/>
</dbReference>
<dbReference type="FunFam" id="1.20.1730.10:FF:000001">
    <property type="entry name" value="Cation/acetate symporter ActP"/>
    <property type="match status" value="1"/>
</dbReference>
<dbReference type="Gene3D" id="1.20.1730.10">
    <property type="entry name" value="Sodium/glucose cotransporter"/>
    <property type="match status" value="1"/>
</dbReference>
<dbReference type="HAMAP" id="MF_01426">
    <property type="entry name" value="Acet_symport_ActP"/>
    <property type="match status" value="1"/>
</dbReference>
<dbReference type="InterPro" id="IPR014083">
    <property type="entry name" value="Cation/Ac_symporter_ActP"/>
</dbReference>
<dbReference type="InterPro" id="IPR038377">
    <property type="entry name" value="Na/Glc_symporter_sf"/>
</dbReference>
<dbReference type="InterPro" id="IPR001734">
    <property type="entry name" value="Na/solute_symporter"/>
</dbReference>
<dbReference type="InterPro" id="IPR018212">
    <property type="entry name" value="Na/solute_symporter_CS"/>
</dbReference>
<dbReference type="InterPro" id="IPR050277">
    <property type="entry name" value="Sodium:Solute_Symporter"/>
</dbReference>
<dbReference type="NCBIfam" id="NF006903">
    <property type="entry name" value="PRK09395.1"/>
    <property type="match status" value="1"/>
</dbReference>
<dbReference type="NCBIfam" id="NF009135">
    <property type="entry name" value="PRK12488.1"/>
    <property type="match status" value="1"/>
</dbReference>
<dbReference type="NCBIfam" id="TIGR00813">
    <property type="entry name" value="sss"/>
    <property type="match status" value="1"/>
</dbReference>
<dbReference type="PANTHER" id="PTHR48086:SF6">
    <property type="entry name" value="CATION_ACETATE SYMPORTER ACTP"/>
    <property type="match status" value="1"/>
</dbReference>
<dbReference type="PANTHER" id="PTHR48086">
    <property type="entry name" value="SODIUM/PROLINE SYMPORTER-RELATED"/>
    <property type="match status" value="1"/>
</dbReference>
<dbReference type="Pfam" id="PF00474">
    <property type="entry name" value="SSF"/>
    <property type="match status" value="1"/>
</dbReference>
<dbReference type="PROSITE" id="PS00456">
    <property type="entry name" value="NA_SOLUT_SYMP_1"/>
    <property type="match status" value="1"/>
</dbReference>
<dbReference type="PROSITE" id="PS00457">
    <property type="entry name" value="NA_SOLUT_SYMP_2"/>
    <property type="match status" value="1"/>
</dbReference>
<dbReference type="PROSITE" id="PS50283">
    <property type="entry name" value="NA_SOLUT_SYMP_3"/>
    <property type="match status" value="1"/>
</dbReference>
<proteinExistence type="inferred from homology"/>
<protein>
    <recommendedName>
        <fullName evidence="1">Cation/acetate symporter ActP</fullName>
    </recommendedName>
    <alternativeName>
        <fullName evidence="1">Acetate permease</fullName>
    </alternativeName>
    <alternativeName>
        <fullName evidence="1">Acetate transporter ActP</fullName>
    </alternativeName>
</protein>
<name>ACTP_ERWT9</name>
<accession>B2VKE4</accession>
<sequence length="552" mass="59105">MSKNYLLAVLALLLSGPVVAADAIAGTVERQPVNMEAIVMFLIFVAMTLGITYWASRRTRSRSDYYTAGGNITGFQNGLAMAGDFMSAASFLGISALVYTSGFDGLIYSLGFLVGWPIILFLIAERLRNLGRYTFADVASYRLKQMPIRTLSACGSLVVVALYLIAQMVGAGKLIQLLFGLDYHVAVVLVGILMVMYVLFGGMLATTWVQIIKAVLLLFGASFMAIMVMKNVGFSFDTLFSEAMKIHPKGVAIMRPGGLVNDPISALSLGLGLMFGTAGLPHILMRFFTVSDAREARKSVFYATGLMGYFYFLTFIIGFGAILLVGANPAFKDATGALLGGNNMAAVHLADAVGGSLFLGFISAVAFATILAVVAGLTLAGASAVSHDLYASVVRKGQASEREELRVSKITVVALGVVAILLGILFEKQNIAFMVGLAFSIAASCNFPIILLSMYWSRLTTRGAMTGGWLGLLTAVILMILGPTIWVQVLGHARPIFPYEYPALFSMLVAFIGTWLFSVTDNSTQGAEERLRFRAQFVRSQTGVGIEGGKGH</sequence>
<feature type="chain" id="PRO_1000145719" description="Cation/acetate symporter ActP">
    <location>
        <begin position="1"/>
        <end position="552"/>
    </location>
</feature>
<feature type="transmembrane region" description="Helical" evidence="1">
    <location>
        <begin position="6"/>
        <end position="26"/>
    </location>
</feature>
<feature type="transmembrane region" description="Helical" evidence="1">
    <location>
        <begin position="35"/>
        <end position="55"/>
    </location>
</feature>
<feature type="transmembrane region" description="Helical" evidence="1">
    <location>
        <begin position="78"/>
        <end position="98"/>
    </location>
</feature>
<feature type="transmembrane region" description="Helical" evidence="1">
    <location>
        <begin position="103"/>
        <end position="123"/>
    </location>
</feature>
<feature type="transmembrane region" description="Helical" evidence="1">
    <location>
        <begin position="151"/>
        <end position="171"/>
    </location>
</feature>
<feature type="transmembrane region" description="Helical" evidence="1">
    <location>
        <begin position="185"/>
        <end position="205"/>
    </location>
</feature>
<feature type="transmembrane region" description="Helical" evidence="1">
    <location>
        <begin position="208"/>
        <end position="228"/>
    </location>
</feature>
<feature type="transmembrane region" description="Helical" evidence="1">
    <location>
        <begin position="264"/>
        <end position="284"/>
    </location>
</feature>
<feature type="transmembrane region" description="Helical" evidence="1">
    <location>
        <begin position="305"/>
        <end position="325"/>
    </location>
</feature>
<feature type="transmembrane region" description="Helical" evidence="1">
    <location>
        <begin position="357"/>
        <end position="377"/>
    </location>
</feature>
<feature type="transmembrane region" description="Helical" evidence="1">
    <location>
        <begin position="407"/>
        <end position="427"/>
    </location>
</feature>
<feature type="transmembrane region" description="Helical" evidence="1">
    <location>
        <begin position="431"/>
        <end position="451"/>
    </location>
</feature>
<feature type="transmembrane region" description="Helical" evidence="1">
    <location>
        <begin position="467"/>
        <end position="487"/>
    </location>
</feature>
<feature type="transmembrane region" description="Helical" evidence="1">
    <location>
        <begin position="496"/>
        <end position="516"/>
    </location>
</feature>